<proteinExistence type="inferred from homology"/>
<gene>
    <name evidence="1" type="primary">rpmJ</name>
    <name type="ordered locus">TM_1476</name>
</gene>
<organism>
    <name type="scientific">Thermotoga maritima (strain ATCC 43589 / DSM 3109 / JCM 10099 / NBRC 100826 / MSB8)</name>
    <dbReference type="NCBI Taxonomy" id="243274"/>
    <lineage>
        <taxon>Bacteria</taxon>
        <taxon>Thermotogati</taxon>
        <taxon>Thermotogota</taxon>
        <taxon>Thermotogae</taxon>
        <taxon>Thermotogales</taxon>
        <taxon>Thermotogaceae</taxon>
        <taxon>Thermotoga</taxon>
    </lineage>
</organism>
<evidence type="ECO:0000255" key="1">
    <source>
        <dbReference type="HAMAP-Rule" id="MF_00251"/>
    </source>
</evidence>
<evidence type="ECO:0000305" key="2"/>
<keyword id="KW-1185">Reference proteome</keyword>
<keyword id="KW-0687">Ribonucleoprotein</keyword>
<keyword id="KW-0689">Ribosomal protein</keyword>
<protein>
    <recommendedName>
        <fullName evidence="1">Large ribosomal subunit protein bL36</fullName>
    </recommendedName>
    <alternativeName>
        <fullName evidence="2">50S ribosomal protein L36</fullName>
    </alternativeName>
</protein>
<reference key="1">
    <citation type="journal article" date="1999" name="Nature">
        <title>Evidence for lateral gene transfer between Archaea and Bacteria from genome sequence of Thermotoga maritima.</title>
        <authorList>
            <person name="Nelson K.E."/>
            <person name="Clayton R.A."/>
            <person name="Gill S.R."/>
            <person name="Gwinn M.L."/>
            <person name="Dodson R.J."/>
            <person name="Haft D.H."/>
            <person name="Hickey E.K."/>
            <person name="Peterson J.D."/>
            <person name="Nelson W.C."/>
            <person name="Ketchum K.A."/>
            <person name="McDonald L.A."/>
            <person name="Utterback T.R."/>
            <person name="Malek J.A."/>
            <person name="Linher K.D."/>
            <person name="Garrett M.M."/>
            <person name="Stewart A.M."/>
            <person name="Cotton M.D."/>
            <person name="Pratt M.S."/>
            <person name="Phillips C.A."/>
            <person name="Richardson D.L."/>
            <person name="Heidelberg J.F."/>
            <person name="Sutton G.G."/>
            <person name="Fleischmann R.D."/>
            <person name="Eisen J.A."/>
            <person name="White O."/>
            <person name="Salzberg S.L."/>
            <person name="Smith H.O."/>
            <person name="Venter J.C."/>
            <person name="Fraser C.M."/>
        </authorList>
    </citation>
    <scope>NUCLEOTIDE SEQUENCE [LARGE SCALE GENOMIC DNA]</scope>
    <source>
        <strain>ATCC 43589 / DSM 3109 / JCM 10099 / NBRC 100826 / MSB8</strain>
    </source>
</reference>
<dbReference type="EMBL" id="AE000512">
    <property type="protein sequence ID" value="AAD36568.1"/>
    <property type="molecule type" value="Genomic_DNA"/>
</dbReference>
<dbReference type="PIR" id="E72247">
    <property type="entry name" value="E72247"/>
</dbReference>
<dbReference type="RefSeq" id="NP_229276.1">
    <property type="nucleotide sequence ID" value="NC_000853.1"/>
</dbReference>
<dbReference type="RefSeq" id="WP_004081787.1">
    <property type="nucleotide sequence ID" value="NZ_CP011107.1"/>
</dbReference>
<dbReference type="SMR" id="Q9X1I6"/>
<dbReference type="FunCoup" id="Q9X1I6">
    <property type="interactions" value="116"/>
</dbReference>
<dbReference type="STRING" id="243274.TM_1476"/>
<dbReference type="PaxDb" id="243274-THEMA_06920"/>
<dbReference type="EnsemblBacteria" id="AAD36568">
    <property type="protein sequence ID" value="AAD36568"/>
    <property type="gene ID" value="TM_1476"/>
</dbReference>
<dbReference type="KEGG" id="tma:TM1476"/>
<dbReference type="KEGG" id="tmi:THEMA_06920"/>
<dbReference type="KEGG" id="tmm:Tmari_1484"/>
<dbReference type="KEGG" id="tmw:THMA_1508"/>
<dbReference type="eggNOG" id="COG0257">
    <property type="taxonomic scope" value="Bacteria"/>
</dbReference>
<dbReference type="InParanoid" id="Q9X1I6"/>
<dbReference type="OrthoDB" id="9802520at2"/>
<dbReference type="Proteomes" id="UP000008183">
    <property type="component" value="Chromosome"/>
</dbReference>
<dbReference type="GO" id="GO:0005737">
    <property type="term" value="C:cytoplasm"/>
    <property type="evidence" value="ECO:0007669"/>
    <property type="project" value="UniProtKB-ARBA"/>
</dbReference>
<dbReference type="GO" id="GO:1990904">
    <property type="term" value="C:ribonucleoprotein complex"/>
    <property type="evidence" value="ECO:0007669"/>
    <property type="project" value="UniProtKB-KW"/>
</dbReference>
<dbReference type="GO" id="GO:0005840">
    <property type="term" value="C:ribosome"/>
    <property type="evidence" value="ECO:0007669"/>
    <property type="project" value="UniProtKB-KW"/>
</dbReference>
<dbReference type="GO" id="GO:0003735">
    <property type="term" value="F:structural constituent of ribosome"/>
    <property type="evidence" value="ECO:0007669"/>
    <property type="project" value="InterPro"/>
</dbReference>
<dbReference type="GO" id="GO:0006412">
    <property type="term" value="P:translation"/>
    <property type="evidence" value="ECO:0007669"/>
    <property type="project" value="UniProtKB-UniRule"/>
</dbReference>
<dbReference type="HAMAP" id="MF_00251">
    <property type="entry name" value="Ribosomal_bL36"/>
    <property type="match status" value="1"/>
</dbReference>
<dbReference type="InterPro" id="IPR000473">
    <property type="entry name" value="Ribosomal_bL36"/>
</dbReference>
<dbReference type="InterPro" id="IPR035977">
    <property type="entry name" value="Ribosomal_bL36_sp"/>
</dbReference>
<dbReference type="NCBIfam" id="TIGR01022">
    <property type="entry name" value="rpmJ_bact"/>
    <property type="match status" value="1"/>
</dbReference>
<dbReference type="PANTHER" id="PTHR42888">
    <property type="entry name" value="50S RIBOSOMAL PROTEIN L36, CHLOROPLASTIC"/>
    <property type="match status" value="1"/>
</dbReference>
<dbReference type="PANTHER" id="PTHR42888:SF1">
    <property type="entry name" value="LARGE RIBOSOMAL SUBUNIT PROTEIN BL36C"/>
    <property type="match status" value="1"/>
</dbReference>
<dbReference type="Pfam" id="PF00444">
    <property type="entry name" value="Ribosomal_L36"/>
    <property type="match status" value="1"/>
</dbReference>
<dbReference type="SUPFAM" id="SSF57840">
    <property type="entry name" value="Ribosomal protein L36"/>
    <property type="match status" value="1"/>
</dbReference>
<dbReference type="PROSITE" id="PS00828">
    <property type="entry name" value="RIBOSOMAL_L36"/>
    <property type="match status" value="1"/>
</dbReference>
<comment type="similarity">
    <text evidence="1">Belongs to the bacterial ribosomal protein bL36 family.</text>
</comment>
<feature type="chain" id="PRO_0000126282" description="Large ribosomal subunit protein bL36">
    <location>
        <begin position="1"/>
        <end position="38"/>
    </location>
</feature>
<sequence length="38" mass="4564">MKVQASVKKRCEHCKIIRRKKRVYVICKVNPKHNQKQG</sequence>
<name>RL36_THEMA</name>
<accession>Q9X1I6</accession>